<keyword id="KW-0158">Chromosome</keyword>
<keyword id="KW-0227">DNA damage</keyword>
<keyword id="KW-0234">DNA repair</keyword>
<keyword id="KW-0235">DNA replication</keyword>
<keyword id="KW-0238">DNA-binding</keyword>
<keyword id="KW-0539">Nucleus</keyword>
<keyword id="KW-1185">Reference proteome</keyword>
<keyword id="KW-0694">RNA-binding</keyword>
<keyword id="KW-0804">Transcription</keyword>
<keyword id="KW-0805">Transcription regulation</keyword>
<protein>
    <recommendedName>
        <fullName>FACT complex subunit Ssrp1</fullName>
    </recommendedName>
    <alternativeName>
        <fullName>Facilitates chromatin transcription complex subunit Ssrp1</fullName>
    </alternativeName>
    <alternativeName>
        <fullName>Recombination signal sequence recognition protein</fullName>
    </alternativeName>
    <alternativeName>
        <fullName>Single-strand recognition protein</fullName>
    </alternativeName>
</protein>
<feature type="chain" id="PRO_0000245194" description="FACT complex subunit Ssrp1">
    <location>
        <begin position="1"/>
        <end position="727"/>
    </location>
</feature>
<feature type="DNA-binding region" description="HMG box" evidence="3">
    <location>
        <begin position="556"/>
        <end position="622"/>
    </location>
</feature>
<feature type="region of interest" description="Disordered" evidence="4">
    <location>
        <begin position="458"/>
        <end position="565"/>
    </location>
</feature>
<feature type="region of interest" description="Disordered" evidence="4">
    <location>
        <begin position="596"/>
        <end position="727"/>
    </location>
</feature>
<feature type="compositionally biased region" description="Acidic residues" evidence="4">
    <location>
        <begin position="464"/>
        <end position="479"/>
    </location>
</feature>
<feature type="compositionally biased region" description="Acidic residues" evidence="4">
    <location>
        <begin position="487"/>
        <end position="508"/>
    </location>
</feature>
<feature type="compositionally biased region" description="Gly residues" evidence="4">
    <location>
        <begin position="510"/>
        <end position="519"/>
    </location>
</feature>
<feature type="compositionally biased region" description="Basic and acidic residues" evidence="4">
    <location>
        <begin position="529"/>
        <end position="555"/>
    </location>
</feature>
<feature type="compositionally biased region" description="Basic and acidic residues" evidence="4">
    <location>
        <begin position="596"/>
        <end position="620"/>
    </location>
</feature>
<feature type="compositionally biased region" description="Basic and acidic residues" evidence="4">
    <location>
        <begin position="675"/>
        <end position="703"/>
    </location>
</feature>
<feature type="compositionally biased region" description="Acidic residues" evidence="4">
    <location>
        <begin position="704"/>
        <end position="727"/>
    </location>
</feature>
<organism>
    <name type="scientific">Drosophila pseudoobscura pseudoobscura</name>
    <name type="common">Fruit fly</name>
    <dbReference type="NCBI Taxonomy" id="46245"/>
    <lineage>
        <taxon>Eukaryota</taxon>
        <taxon>Metazoa</taxon>
        <taxon>Ecdysozoa</taxon>
        <taxon>Arthropoda</taxon>
        <taxon>Hexapoda</taxon>
        <taxon>Insecta</taxon>
        <taxon>Pterygota</taxon>
        <taxon>Neoptera</taxon>
        <taxon>Endopterygota</taxon>
        <taxon>Diptera</taxon>
        <taxon>Brachycera</taxon>
        <taxon>Muscomorpha</taxon>
        <taxon>Ephydroidea</taxon>
        <taxon>Drosophilidae</taxon>
        <taxon>Drosophila</taxon>
        <taxon>Sophophora</taxon>
    </lineage>
</organism>
<proteinExistence type="inferred from homology"/>
<comment type="function">
    <text evidence="1">Component of the FACT complex, a general chromatin factor that acts to reorganize nucleosomes. The FACT complex is involved in multiple processes that require DNA as a template such as mRNA elongation, DNA replication and DNA repair. During transcription elongation the FACT complex acts as a histone chaperone that both destabilizes and restores nucleosomal structure. It facilitates the passage of RNA polymerase II and transcription by promoting the dissociation of one histone H2A-H2B dimer from the nucleosome, then subsequently promotes the reestablishment of the nucleosome following the passage of RNA polymerase II. Binds specifically to single-stranded DNA and RNA with highest affinity for nucleotides G and U. The FACT complex is required for expression of Hox genes (By similarity).</text>
</comment>
<comment type="subunit">
    <text evidence="1">Component of the FACT complex, a stable heterodimer of dre4/spt16 and Ssrp.</text>
</comment>
<comment type="subcellular location">
    <subcellularLocation>
        <location evidence="2">Nucleus</location>
    </subcellularLocation>
    <subcellularLocation>
        <location evidence="2">Chromosome</location>
    </subcellularLocation>
    <subcellularLocation>
        <location evidence="2">Nucleus</location>
        <location evidence="2">Nucleolus</location>
    </subcellularLocation>
    <text evidence="2">Colocalizes with RNA polymerase II on chromatin. Recruited to actively transcribed loci.</text>
</comment>
<comment type="similarity">
    <text evidence="5">Belongs to the SSRP1 family.</text>
</comment>
<sequence length="727" mass="81769">MTDSLEYNDINAEVRGVLSSGRLKLTDQNIIFKNNKTGKVEQISVDDIDLINSQKFVGTWGLRVFTKSGALHRFTGFRDSEHEKLGKFIKDAYSQEMVEKEMCVKGWNWGTARFMGSVLSFDKDSKTIFEVPLSHVSQCVTGKNEVTLEYHQNDDAPVGLLEMRFHIPAVESADDDPVEKFHQNVMSKASVISASGESIAIFREIQILTPRGRYDIKIFSTFFQLHGKTFDYKIPMDSVLRLFMLPHKDSRQMFFVLSLDPPIKQGQTRYHYLVLLFAPDEETTIELPFSEAELRDKYEGKLEKELSGPVYEVMGKVMKVLIGRKITGPGNFIGHSGTAAVGCSFKAAAGYLYPLERGFIYIHKPPLHIRFEEISSVNFARSGGSTRSFDFEVTLKNGTVHIFSSIEKEEYAKLFDFITQKKLHVSNMGKDKSGYKDVDFGDSDNENEPDAYLARLKAEAREKEEEDDDGDDSDEESTDEDFKPNENESDVAEEYDSNVEDDSDDDSDASGGGGDGGTDGSTKKKHKEKKNEKKEKTHKEKEKIKKPTKKKDTGKPKRGTSAFMLWLNDTRESIKRENPGIKVTEIAKKGGEMWKELKDKSKWEEAANKDKIRYQEEMRNYKSGAGGGSEDEKGGTSKATKKRKSEPSPSKKANTSGSGFKSKEYISDDESTSDDQEKVKEIPKKKNKSTAEDKDKNSKKSESEGGDSDDASNASEDDDEEEDEGSD</sequence>
<reference key="1">
    <citation type="journal article" date="2005" name="Genome Res.">
        <title>Comparative genome sequencing of Drosophila pseudoobscura: chromosomal, gene, and cis-element evolution.</title>
        <authorList>
            <person name="Richards S."/>
            <person name="Liu Y."/>
            <person name="Bettencourt B.R."/>
            <person name="Hradecky P."/>
            <person name="Letovsky S."/>
            <person name="Nielsen R."/>
            <person name="Thornton K."/>
            <person name="Hubisz M.J."/>
            <person name="Chen R."/>
            <person name="Meisel R.P."/>
            <person name="Couronne O."/>
            <person name="Hua S."/>
            <person name="Smith M.A."/>
            <person name="Zhang P."/>
            <person name="Liu J."/>
            <person name="Bussemaker H.J."/>
            <person name="van Batenburg M.F."/>
            <person name="Howells S.L."/>
            <person name="Scherer S.E."/>
            <person name="Sodergren E."/>
            <person name="Matthews B.B."/>
            <person name="Crosby M.A."/>
            <person name="Schroeder A.J."/>
            <person name="Ortiz-Barrientos D."/>
            <person name="Rives C.M."/>
            <person name="Metzker M.L."/>
            <person name="Muzny D.M."/>
            <person name="Scott G."/>
            <person name="Steffen D."/>
            <person name="Wheeler D.A."/>
            <person name="Worley K.C."/>
            <person name="Havlak P."/>
            <person name="Durbin K.J."/>
            <person name="Egan A."/>
            <person name="Gill R."/>
            <person name="Hume J."/>
            <person name="Morgan M.B."/>
            <person name="Miner G."/>
            <person name="Hamilton C."/>
            <person name="Huang Y."/>
            <person name="Waldron L."/>
            <person name="Verduzco D."/>
            <person name="Clerc-Blankenburg K.P."/>
            <person name="Dubchak I."/>
            <person name="Noor M.A.F."/>
            <person name="Anderson W."/>
            <person name="White K.P."/>
            <person name="Clark A.G."/>
            <person name="Schaeffer S.W."/>
            <person name="Gelbart W.M."/>
            <person name="Weinstock G.M."/>
            <person name="Gibbs R.A."/>
        </authorList>
    </citation>
    <scope>NUCLEOTIDE SEQUENCE [LARGE SCALE GENOMIC DNA]</scope>
    <source>
        <strain>MV2-25 / Tucson 14011-0121.94</strain>
    </source>
</reference>
<evidence type="ECO:0000250" key="1"/>
<evidence type="ECO:0000250" key="2">
    <source>
        <dbReference type="UniProtKB" id="Q05344"/>
    </source>
</evidence>
<evidence type="ECO:0000255" key="3">
    <source>
        <dbReference type="PROSITE-ProRule" id="PRU00267"/>
    </source>
</evidence>
<evidence type="ECO:0000256" key="4">
    <source>
        <dbReference type="SAM" id="MobiDB-lite"/>
    </source>
</evidence>
<evidence type="ECO:0000305" key="5"/>
<name>SSRP1_DROPS</name>
<accession>Q293F6</accession>
<gene>
    <name type="primary">Ssrp</name>
    <name type="ORF">GA18454</name>
</gene>
<dbReference type="EMBL" id="CM000071">
    <property type="protein sequence ID" value="EAL24655.2"/>
    <property type="molecule type" value="Genomic_DNA"/>
</dbReference>
<dbReference type="RefSeq" id="XP_001357531.2">
    <property type="nucleotide sequence ID" value="XM_001357495.3"/>
</dbReference>
<dbReference type="SMR" id="Q293F6"/>
<dbReference type="FunCoup" id="Q293F6">
    <property type="interactions" value="2459"/>
</dbReference>
<dbReference type="STRING" id="46245.Q293F6"/>
<dbReference type="EnsemblMetazoa" id="FBtr0278808">
    <property type="protein sequence ID" value="FBpp0277246"/>
    <property type="gene ID" value="FBgn0078456"/>
</dbReference>
<dbReference type="GeneID" id="4803391"/>
<dbReference type="KEGG" id="dpo:4803391"/>
<dbReference type="CTD" id="37767"/>
<dbReference type="eggNOG" id="KOG0526">
    <property type="taxonomic scope" value="Eukaryota"/>
</dbReference>
<dbReference type="HOGENOM" id="CLU_017374_2_0_1"/>
<dbReference type="InParanoid" id="Q293F6"/>
<dbReference type="OMA" id="QVVTKIF"/>
<dbReference type="Proteomes" id="UP000001819">
    <property type="component" value="Chromosome 3"/>
</dbReference>
<dbReference type="Bgee" id="FBgn0078456">
    <property type="expression patterns" value="Expressed in female reproductive system and 3 other cell types or tissues"/>
</dbReference>
<dbReference type="GO" id="GO:0035101">
    <property type="term" value="C:FACT complex"/>
    <property type="evidence" value="ECO:0007669"/>
    <property type="project" value="TreeGrafter"/>
</dbReference>
<dbReference type="GO" id="GO:0005730">
    <property type="term" value="C:nucleolus"/>
    <property type="evidence" value="ECO:0007669"/>
    <property type="project" value="UniProtKB-SubCell"/>
</dbReference>
<dbReference type="GO" id="GO:0003677">
    <property type="term" value="F:DNA binding"/>
    <property type="evidence" value="ECO:0007669"/>
    <property type="project" value="UniProtKB-KW"/>
</dbReference>
<dbReference type="GO" id="GO:0042393">
    <property type="term" value="F:histone binding"/>
    <property type="evidence" value="ECO:0007669"/>
    <property type="project" value="TreeGrafter"/>
</dbReference>
<dbReference type="GO" id="GO:0031491">
    <property type="term" value="F:nucleosome binding"/>
    <property type="evidence" value="ECO:0007669"/>
    <property type="project" value="TreeGrafter"/>
</dbReference>
<dbReference type="GO" id="GO:0003723">
    <property type="term" value="F:RNA binding"/>
    <property type="evidence" value="ECO:0007669"/>
    <property type="project" value="UniProtKB-KW"/>
</dbReference>
<dbReference type="GO" id="GO:0006281">
    <property type="term" value="P:DNA repair"/>
    <property type="evidence" value="ECO:0007669"/>
    <property type="project" value="UniProtKB-KW"/>
</dbReference>
<dbReference type="GO" id="GO:0006260">
    <property type="term" value="P:DNA replication"/>
    <property type="evidence" value="ECO:0007669"/>
    <property type="project" value="UniProtKB-KW"/>
</dbReference>
<dbReference type="GO" id="GO:1902275">
    <property type="term" value="P:regulation of chromatin organization"/>
    <property type="evidence" value="ECO:0007669"/>
    <property type="project" value="TreeGrafter"/>
</dbReference>
<dbReference type="CDD" id="cd21994">
    <property type="entry name" value="HMG-box_SSRP1-like"/>
    <property type="match status" value="1"/>
</dbReference>
<dbReference type="CDD" id="cd13230">
    <property type="entry name" value="PH1_SSRP1-like"/>
    <property type="match status" value="1"/>
</dbReference>
<dbReference type="CDD" id="cd13231">
    <property type="entry name" value="PH2_SSRP1-like"/>
    <property type="match status" value="1"/>
</dbReference>
<dbReference type="FunFam" id="2.30.29.220:FF:000001">
    <property type="entry name" value="FACT complex subunit SSRP1"/>
    <property type="match status" value="1"/>
</dbReference>
<dbReference type="FunFam" id="2.30.29.30:FF:000119">
    <property type="entry name" value="FACT complex subunit SSRP1"/>
    <property type="match status" value="1"/>
</dbReference>
<dbReference type="FunFam" id="2.30.29.150:FF:000001">
    <property type="entry name" value="Fact complex subunit ssrp1"/>
    <property type="match status" value="1"/>
</dbReference>
<dbReference type="FunFam" id="2.30.29.30:FF:000098">
    <property type="entry name" value="Fact complex subunit ssrp1"/>
    <property type="match status" value="1"/>
</dbReference>
<dbReference type="FunFam" id="1.10.30.10:FF:000036">
    <property type="entry name" value="high mobility group protein D"/>
    <property type="match status" value="1"/>
</dbReference>
<dbReference type="Gene3D" id="2.30.29.150">
    <property type="match status" value="1"/>
</dbReference>
<dbReference type="Gene3D" id="1.10.30.10">
    <property type="entry name" value="High mobility group box domain"/>
    <property type="match status" value="1"/>
</dbReference>
<dbReference type="Gene3D" id="2.30.29.30">
    <property type="entry name" value="Pleckstrin-homology domain (PH domain)/Phosphotyrosine-binding domain (PTB)"/>
    <property type="match status" value="2"/>
</dbReference>
<dbReference type="Gene3D" id="2.30.29.220">
    <property type="entry name" value="Structure-specific recognition protein (SSRP1)"/>
    <property type="match status" value="1"/>
</dbReference>
<dbReference type="InterPro" id="IPR009071">
    <property type="entry name" value="HMG_box_dom"/>
</dbReference>
<dbReference type="InterPro" id="IPR036910">
    <property type="entry name" value="HMG_box_dom_sf"/>
</dbReference>
<dbReference type="InterPro" id="IPR011993">
    <property type="entry name" value="PH-like_dom_sf"/>
</dbReference>
<dbReference type="InterPro" id="IPR013719">
    <property type="entry name" value="RTT106/SPT16-like_middle_dom"/>
</dbReference>
<dbReference type="InterPro" id="IPR050454">
    <property type="entry name" value="RTT106/SSRP1_HistChap/FACT"/>
</dbReference>
<dbReference type="InterPro" id="IPR048993">
    <property type="entry name" value="SSRP1-like_PH1"/>
</dbReference>
<dbReference type="InterPro" id="IPR000969">
    <property type="entry name" value="SSRP1/POB3"/>
</dbReference>
<dbReference type="InterPro" id="IPR035417">
    <property type="entry name" value="SSRP1/POB3_N"/>
</dbReference>
<dbReference type="InterPro" id="IPR024954">
    <property type="entry name" value="SSRP1_DD"/>
</dbReference>
<dbReference type="InterPro" id="IPR038167">
    <property type="entry name" value="SSRP1_sf"/>
</dbReference>
<dbReference type="PANTHER" id="PTHR45849">
    <property type="entry name" value="FACT COMPLEX SUBUNIT SSRP1"/>
    <property type="match status" value="1"/>
</dbReference>
<dbReference type="PANTHER" id="PTHR45849:SF1">
    <property type="entry name" value="FACT COMPLEX SUBUNIT SSRP1"/>
    <property type="match status" value="1"/>
</dbReference>
<dbReference type="Pfam" id="PF00505">
    <property type="entry name" value="HMG_box"/>
    <property type="match status" value="1"/>
</dbReference>
<dbReference type="Pfam" id="PF21103">
    <property type="entry name" value="PH1_SSRP1-like"/>
    <property type="match status" value="1"/>
</dbReference>
<dbReference type="Pfam" id="PF17292">
    <property type="entry name" value="POB3_N"/>
    <property type="match status" value="1"/>
</dbReference>
<dbReference type="Pfam" id="PF08512">
    <property type="entry name" value="Rttp106-like_middle"/>
    <property type="match status" value="1"/>
</dbReference>
<dbReference type="Pfam" id="PF03531">
    <property type="entry name" value="SSrecog"/>
    <property type="match status" value="1"/>
</dbReference>
<dbReference type="PRINTS" id="PR00887">
    <property type="entry name" value="SSRCOGNITION"/>
</dbReference>
<dbReference type="SMART" id="SM00398">
    <property type="entry name" value="HMG"/>
    <property type="match status" value="1"/>
</dbReference>
<dbReference type="SMART" id="SM01287">
    <property type="entry name" value="Rtt106"/>
    <property type="match status" value="1"/>
</dbReference>
<dbReference type="SUPFAM" id="SSF47095">
    <property type="entry name" value="HMG-box"/>
    <property type="match status" value="1"/>
</dbReference>
<dbReference type="SUPFAM" id="SSF50729">
    <property type="entry name" value="PH domain-like"/>
    <property type="match status" value="1"/>
</dbReference>
<dbReference type="PROSITE" id="PS50118">
    <property type="entry name" value="HMG_BOX_2"/>
    <property type="match status" value="1"/>
</dbReference>